<feature type="peptide" id="PRO_0000044739" description="Palustrin-2a">
    <location>
        <begin position="1"/>
        <end position="31"/>
    </location>
</feature>
<feature type="disulfide bond" evidence="1">
    <location>
        <begin position="23"/>
        <end position="29"/>
    </location>
</feature>
<dbReference type="SMR" id="P84278"/>
<dbReference type="GO" id="GO:0005576">
    <property type="term" value="C:extracellular region"/>
    <property type="evidence" value="ECO:0000314"/>
    <property type="project" value="UniProtKB"/>
</dbReference>
<dbReference type="GO" id="GO:0050829">
    <property type="term" value="P:defense response to Gram-negative bacterium"/>
    <property type="evidence" value="ECO:0000314"/>
    <property type="project" value="UniProtKB"/>
</dbReference>
<dbReference type="InterPro" id="IPR012521">
    <property type="entry name" value="Antimicrobial_frog_2"/>
</dbReference>
<dbReference type="Pfam" id="PF08023">
    <property type="entry name" value="Antimicrobial_2"/>
    <property type="match status" value="1"/>
</dbReference>
<proteinExistence type="evidence at protein level"/>
<name>PA2A_LITPA</name>
<organism>
    <name type="scientific">Lithobates palustris</name>
    <name type="common">Pickerel frog</name>
    <name type="synonym">Rana palustris</name>
    <dbReference type="NCBI Taxonomy" id="298395"/>
    <lineage>
        <taxon>Eukaryota</taxon>
        <taxon>Metazoa</taxon>
        <taxon>Chordata</taxon>
        <taxon>Craniata</taxon>
        <taxon>Vertebrata</taxon>
        <taxon>Euteleostomi</taxon>
        <taxon>Amphibia</taxon>
        <taxon>Batrachia</taxon>
        <taxon>Anura</taxon>
        <taxon>Neobatrachia</taxon>
        <taxon>Ranoidea</taxon>
        <taxon>Ranidae</taxon>
        <taxon>Lithobates</taxon>
    </lineage>
</organism>
<comment type="function">
    <text evidence="2">Antimicrobial activity against Gram-negative bacterium E.coli.</text>
</comment>
<comment type="subcellular location">
    <subcellularLocation>
        <location evidence="2">Secreted</location>
    </subcellularLocation>
</comment>
<comment type="tissue specificity">
    <text evidence="2">Expressed by the skin glands.</text>
</comment>
<comment type="mass spectrometry" mass="3190.8" error="0.6" method="Electrospray" evidence="2"/>
<comment type="similarity">
    <text evidence="2">Belongs to the frog skin active peptide (FSAP) family. Brevinin subfamily.</text>
</comment>
<reference evidence="3" key="1">
    <citation type="journal article" date="2000" name="Biochim. Biophys. Acta">
        <title>Multiple antimicrobial peptides and peptides related to bradykinin and neuromedin N isolated from skin secretions of the pickerel frog, Rana palustris.</title>
        <authorList>
            <person name="Basir Y.J."/>
            <person name="Knoop F.C."/>
            <person name="Dulka J."/>
            <person name="Conlon J.M."/>
        </authorList>
    </citation>
    <scope>PROTEIN SEQUENCE</scope>
    <scope>FUNCTION</scope>
    <scope>SUBCELLULAR LOCATION</scope>
    <scope>TISSUE SPECIFICITY</scope>
    <scope>MASS SPECTROMETRY</scope>
    <source>
        <tissue evidence="2">Skin secretion</tissue>
    </source>
</reference>
<evidence type="ECO:0000250" key="1">
    <source>
        <dbReference type="UniProtKB" id="P82875"/>
    </source>
</evidence>
<evidence type="ECO:0000269" key="2">
    <source>
    </source>
</evidence>
<evidence type="ECO:0000305" key="3"/>
<accession>P84278</accession>
<keyword id="KW-0878">Amphibian defense peptide</keyword>
<keyword id="KW-0044">Antibiotic</keyword>
<keyword id="KW-0929">Antimicrobial</keyword>
<keyword id="KW-0903">Direct protein sequencing</keyword>
<keyword id="KW-1015">Disulfide bond</keyword>
<keyword id="KW-0964">Secreted</keyword>
<protein>
    <recommendedName>
        <fullName>Palustrin-2a</fullName>
    </recommendedName>
</protein>
<sequence length="31" mass="3193">GFLSTVKNLATNVAGTVLDTIRCKVTGGCRP</sequence>